<reference key="1">
    <citation type="journal article" date="1993" name="J. Biol. Chem.">
        <title>Characterization of the integrin specificities of disintegrins isolated from American pit viper venoms.</title>
        <authorList>
            <person name="Scarborough R.M."/>
            <person name="Rose J.W."/>
            <person name="Naughton M.A."/>
            <person name="Phillips D.R."/>
            <person name="Nannizzi L."/>
            <person name="Arfsten A."/>
            <person name="Campbell A.M."/>
            <person name="Charo I.F."/>
        </authorList>
    </citation>
    <scope>PROTEIN SEQUENCE</scope>
    <scope>SUBCELLULAR LOCATION</scope>
    <source>
        <tissue>Venom</tissue>
    </source>
</reference>
<name>VM2I_CROCC</name>
<keyword id="KW-1217">Cell adhesion impairing toxin</keyword>
<keyword id="KW-0903">Direct protein sequencing</keyword>
<keyword id="KW-1015">Disulfide bond</keyword>
<keyword id="KW-1199">Hemostasis impairing toxin</keyword>
<keyword id="KW-1201">Platelet aggregation inhibiting toxin</keyword>
<keyword id="KW-0964">Secreted</keyword>
<keyword id="KW-0800">Toxin</keyword>
<sequence length="73" mass="7743">EAGEECDCGTPENPCCDAATCKLRPGAQCADGLCCDQCRFMKKGTVCRVARGDWNDDTCTGQSADCPRNGLYG</sequence>
<organism>
    <name type="scientific">Crotalus cerastes cerastes</name>
    <name type="common">Mojave desert sidewinder</name>
    <dbReference type="NCBI Taxonomy" id="31149"/>
    <lineage>
        <taxon>Eukaryota</taxon>
        <taxon>Metazoa</taxon>
        <taxon>Chordata</taxon>
        <taxon>Craniata</taxon>
        <taxon>Vertebrata</taxon>
        <taxon>Euteleostomi</taxon>
        <taxon>Lepidosauria</taxon>
        <taxon>Squamata</taxon>
        <taxon>Bifurcata</taxon>
        <taxon>Unidentata</taxon>
        <taxon>Episquamata</taxon>
        <taxon>Toxicofera</taxon>
        <taxon>Serpentes</taxon>
        <taxon>Colubroidea</taxon>
        <taxon>Viperidae</taxon>
        <taxon>Crotalinae</taxon>
        <taxon>Crotalus</taxon>
    </lineage>
</organism>
<comment type="function">
    <text>Inhibits fibrinogen interaction with platelets. Acts by binding to alpha-IIb/beta-3 (ITGA2B/ITGB3) on the platelet surface and inhibits aggregation induced by ADP, thrombin, platelet-activating factor and collagen.</text>
</comment>
<comment type="subunit">
    <text evidence="1">Monomer (disintegrin).</text>
</comment>
<comment type="subcellular location">
    <subcellularLocation>
        <location evidence="4">Secreted</location>
    </subcellularLocation>
</comment>
<comment type="tissue specificity">
    <text evidence="7">Expressed by the venom gland.</text>
</comment>
<comment type="miscellaneous">
    <text>The disintegrin belongs to the medium disintegrin subfamily.</text>
</comment>
<comment type="similarity">
    <text evidence="6">Belongs to the venom metalloproteinase (M12B) family. P-II subfamily. P-IIa sub-subfamily.</text>
</comment>
<feature type="chain" id="PRO_0000101792" description="Disintegrin cerastin" evidence="4">
    <location>
        <begin position="1"/>
        <end position="73"/>
    </location>
</feature>
<feature type="domain" description="Disintegrin" evidence="3">
    <location>
        <begin position="1"/>
        <end position="73"/>
    </location>
</feature>
<feature type="short sequence motif" description="Cell attachment site">
    <location>
        <begin position="51"/>
        <end position="53"/>
    </location>
</feature>
<feature type="disulfide bond" evidence="2">
    <location>
        <begin position="6"/>
        <end position="21"/>
    </location>
</feature>
<feature type="disulfide bond" evidence="2">
    <location>
        <begin position="8"/>
        <end position="16"/>
    </location>
</feature>
<feature type="disulfide bond" evidence="2">
    <location>
        <begin position="15"/>
        <end position="38"/>
    </location>
</feature>
<feature type="disulfide bond" evidence="2">
    <location>
        <begin position="29"/>
        <end position="35"/>
    </location>
</feature>
<feature type="disulfide bond" evidence="2">
    <location>
        <begin position="34"/>
        <end position="59"/>
    </location>
</feature>
<feature type="disulfide bond" evidence="2 3">
    <location>
        <begin position="47"/>
        <end position="66"/>
    </location>
</feature>
<dbReference type="PIR" id="A43019">
    <property type="entry name" value="A43019"/>
</dbReference>
<dbReference type="SMR" id="P31982"/>
<dbReference type="GO" id="GO:0005576">
    <property type="term" value="C:extracellular region"/>
    <property type="evidence" value="ECO:0007669"/>
    <property type="project" value="UniProtKB-SubCell"/>
</dbReference>
<dbReference type="GO" id="GO:0005886">
    <property type="term" value="C:plasma membrane"/>
    <property type="evidence" value="ECO:0007669"/>
    <property type="project" value="TreeGrafter"/>
</dbReference>
<dbReference type="GO" id="GO:0090729">
    <property type="term" value="F:toxin activity"/>
    <property type="evidence" value="ECO:0007669"/>
    <property type="project" value="UniProtKB-KW"/>
</dbReference>
<dbReference type="FunFam" id="4.10.70.10:FF:000005">
    <property type="entry name" value="Zinc metalloproteinase/disintegrin"/>
    <property type="match status" value="1"/>
</dbReference>
<dbReference type="Gene3D" id="4.10.70.10">
    <property type="entry name" value="Disintegrin domain"/>
    <property type="match status" value="1"/>
</dbReference>
<dbReference type="InterPro" id="IPR018358">
    <property type="entry name" value="Disintegrin_CS"/>
</dbReference>
<dbReference type="InterPro" id="IPR001762">
    <property type="entry name" value="Disintegrin_dom"/>
</dbReference>
<dbReference type="InterPro" id="IPR036436">
    <property type="entry name" value="Disintegrin_dom_sf"/>
</dbReference>
<dbReference type="PANTHER" id="PTHR11905">
    <property type="entry name" value="ADAM A DISINTEGRIN AND METALLOPROTEASE DOMAIN"/>
    <property type="match status" value="1"/>
</dbReference>
<dbReference type="PANTHER" id="PTHR11905:SF32">
    <property type="entry name" value="DISINTEGRIN AND METALLOPROTEINASE DOMAIN-CONTAINING PROTEIN 28"/>
    <property type="match status" value="1"/>
</dbReference>
<dbReference type="Pfam" id="PF00200">
    <property type="entry name" value="Disintegrin"/>
    <property type="match status" value="1"/>
</dbReference>
<dbReference type="PRINTS" id="PR00289">
    <property type="entry name" value="DISINTEGRIN"/>
</dbReference>
<dbReference type="SMART" id="SM00050">
    <property type="entry name" value="DISIN"/>
    <property type="match status" value="1"/>
</dbReference>
<dbReference type="SUPFAM" id="SSF57552">
    <property type="entry name" value="Blood coagulation inhibitor (disintegrin)"/>
    <property type="match status" value="1"/>
</dbReference>
<dbReference type="PROSITE" id="PS00427">
    <property type="entry name" value="DISINTEGRIN_1"/>
    <property type="match status" value="1"/>
</dbReference>
<dbReference type="PROSITE" id="PS50214">
    <property type="entry name" value="DISINTEGRIN_2"/>
    <property type="match status" value="1"/>
</dbReference>
<proteinExistence type="evidence at protein level"/>
<protein>
    <recommendedName>
        <fullName evidence="5">Disintegrin cerastin</fullName>
    </recommendedName>
    <alternativeName>
        <fullName>Platelet aggregation activation inhibitor</fullName>
    </alternativeName>
</protein>
<accession>P31982</accession>
<evidence type="ECO:0000250" key="1"/>
<evidence type="ECO:0000250" key="2">
    <source>
        <dbReference type="UniProtKB" id="Q0NZX5"/>
    </source>
</evidence>
<evidence type="ECO:0000255" key="3">
    <source>
        <dbReference type="PROSITE-ProRule" id="PRU00068"/>
    </source>
</evidence>
<evidence type="ECO:0000269" key="4">
    <source>
    </source>
</evidence>
<evidence type="ECO:0000303" key="5">
    <source>
    </source>
</evidence>
<evidence type="ECO:0000305" key="6"/>
<evidence type="ECO:0000305" key="7">
    <source>
    </source>
</evidence>